<name>ARGJ_PHYPA</name>
<reference key="1">
    <citation type="journal article" date="2008" name="Science">
        <title>The Physcomitrella genome reveals evolutionary insights into the conquest of land by plants.</title>
        <authorList>
            <person name="Rensing S.A."/>
            <person name="Lang D."/>
            <person name="Zimmer A.D."/>
            <person name="Terry A."/>
            <person name="Salamov A."/>
            <person name="Shapiro H."/>
            <person name="Nishiyama T."/>
            <person name="Perroud P.-F."/>
            <person name="Lindquist E.A."/>
            <person name="Kamisugi Y."/>
            <person name="Tanahashi T."/>
            <person name="Sakakibara K."/>
            <person name="Fujita T."/>
            <person name="Oishi K."/>
            <person name="Shin-I T."/>
            <person name="Kuroki Y."/>
            <person name="Toyoda A."/>
            <person name="Suzuki Y."/>
            <person name="Hashimoto S.-I."/>
            <person name="Yamaguchi K."/>
            <person name="Sugano S."/>
            <person name="Kohara Y."/>
            <person name="Fujiyama A."/>
            <person name="Anterola A."/>
            <person name="Aoki S."/>
            <person name="Ashton N."/>
            <person name="Barbazuk W.B."/>
            <person name="Barker E."/>
            <person name="Bennetzen J.L."/>
            <person name="Blankenship R."/>
            <person name="Cho S.H."/>
            <person name="Dutcher S.K."/>
            <person name="Estelle M."/>
            <person name="Fawcett J.A."/>
            <person name="Gundlach H."/>
            <person name="Hanada K."/>
            <person name="Heyl A."/>
            <person name="Hicks K.A."/>
            <person name="Hughes J."/>
            <person name="Lohr M."/>
            <person name="Mayer K."/>
            <person name="Melkozernov A."/>
            <person name="Murata T."/>
            <person name="Nelson D.R."/>
            <person name="Pils B."/>
            <person name="Prigge M."/>
            <person name="Reiss B."/>
            <person name="Renner T."/>
            <person name="Rombauts S."/>
            <person name="Rushton P.J."/>
            <person name="Sanderfoot A."/>
            <person name="Schween G."/>
            <person name="Shiu S.-H."/>
            <person name="Stueber K."/>
            <person name="Theodoulou F.L."/>
            <person name="Tu H."/>
            <person name="Van de Peer Y."/>
            <person name="Verrier P.J."/>
            <person name="Waters E."/>
            <person name="Wood A."/>
            <person name="Yang L."/>
            <person name="Cove D."/>
            <person name="Cuming A.C."/>
            <person name="Hasebe M."/>
            <person name="Lucas S."/>
            <person name="Mishler B.D."/>
            <person name="Reski R."/>
            <person name="Grigoriev I.V."/>
            <person name="Quatrano R.S."/>
            <person name="Boore J.L."/>
        </authorList>
    </citation>
    <scope>NUCLEOTIDE SEQUENCE [LARGE SCALE GENOMIC DNA]</scope>
    <source>
        <strain>cv. Gransden 2004</strain>
    </source>
</reference>
<evidence type="ECO:0000255" key="1">
    <source>
        <dbReference type="HAMAP-Rule" id="MF_03124"/>
    </source>
</evidence>
<organism>
    <name type="scientific">Physcomitrium patens</name>
    <name type="common">Spreading-leaved earth moss</name>
    <name type="synonym">Physcomitrella patens</name>
    <dbReference type="NCBI Taxonomy" id="3218"/>
    <lineage>
        <taxon>Eukaryota</taxon>
        <taxon>Viridiplantae</taxon>
        <taxon>Streptophyta</taxon>
        <taxon>Embryophyta</taxon>
        <taxon>Bryophyta</taxon>
        <taxon>Bryophytina</taxon>
        <taxon>Bryopsida</taxon>
        <taxon>Funariidae</taxon>
        <taxon>Funariales</taxon>
        <taxon>Funariaceae</taxon>
        <taxon>Physcomitrium</taxon>
    </lineage>
</organism>
<sequence>MAMVSSCRLCLRTDSLYLAIEQSAAQANSLPRSSCSVVPRRTQIICPQLQVLPNALKSLQPGHGLKRLKEGNVFAVRASTTTDTDVNVDADAVAPGKFIPASPIVLSKGPWEQIPGGVTAAKGFRAAGMYAQLRAAGKKPDLALIVCDTDAVSAGTFTKNVVAAAPVIYCKKTLADSSTARAILINAGQANAATGDAGYQDTLECVAAVAKHCGVPEGAVLIESTGVIGRRIKKDALIEAVPKLVGSLSASVASADAAAVAITTTDLVSKSVAIETKIGGTTVRLGGIAKGSGMIHPNMATMLGVVTCDVDVTAEVWRPMVITAVNRSFNQITVDGDSSTNDTLLALASGAAGGPKISDINSEEARQLQAALDAVLQGLAKSIASDGEGATCLVEVTVTGASDEAAAATVARSVAASSLTKAAIYGRDPNWGRIACATGYAGVPFDPLCLQIYLGDFHLMEKGQPLEFDSNGASAYLKKAGEVHGTVSINICIGHGPGQSQAWGCDLSYDYVKINAEYTT</sequence>
<accession>A9SLE5</accession>
<keyword id="KW-0012">Acyltransferase</keyword>
<keyword id="KW-0028">Amino-acid biosynthesis</keyword>
<keyword id="KW-0055">Arginine biosynthesis</keyword>
<keyword id="KW-0068">Autocatalytic cleavage</keyword>
<keyword id="KW-0150">Chloroplast</keyword>
<keyword id="KW-0511">Multifunctional enzyme</keyword>
<keyword id="KW-0934">Plastid</keyword>
<keyword id="KW-1185">Reference proteome</keyword>
<keyword id="KW-0808">Transferase</keyword>
<feature type="chain" id="PRO_0000397984" description="Arginine biosynthesis bifunctional protein ArgJ alpha chain" evidence="1">
    <location>
        <begin position="1"/>
        <end position="300"/>
    </location>
</feature>
<feature type="chain" id="PRO_0000397985" description="Arginine biosynthesis bifunctional protein ArgJ beta chain" evidence="1">
    <location>
        <begin position="301"/>
        <end position="520"/>
    </location>
</feature>
<feature type="active site" description="Nucleophile" evidence="1">
    <location>
        <position position="301"/>
    </location>
</feature>
<feature type="binding site" evidence="1">
    <location>
        <position position="264"/>
    </location>
    <ligand>
        <name>substrate</name>
    </ligand>
</feature>
<feature type="binding site" evidence="1">
    <location>
        <position position="290"/>
    </location>
    <ligand>
        <name>substrate</name>
    </ligand>
</feature>
<feature type="binding site" evidence="1">
    <location>
        <position position="301"/>
    </location>
    <ligand>
        <name>substrate</name>
    </ligand>
</feature>
<feature type="binding site" evidence="1">
    <location>
        <position position="388"/>
    </location>
    <ligand>
        <name>substrate</name>
    </ligand>
</feature>
<feature type="binding site" evidence="1">
    <location>
        <position position="515"/>
    </location>
    <ligand>
        <name>substrate</name>
    </ligand>
</feature>
<feature type="binding site" evidence="1">
    <location>
        <position position="520"/>
    </location>
    <ligand>
        <name>substrate</name>
    </ligand>
</feature>
<feature type="site" description="Involved in the stabilization of negative charge on the oxyanion by the formation of the oxyanion hole" evidence="1">
    <location>
        <position position="225"/>
    </location>
</feature>
<feature type="site" description="Involved in the stabilization of negative charge on the oxyanion by the formation of the oxyanion hole" evidence="1">
    <location>
        <position position="226"/>
    </location>
</feature>
<feature type="site" description="Cleavage; by autolysis" evidence="1">
    <location>
        <begin position="300"/>
        <end position="301"/>
    </location>
</feature>
<protein>
    <recommendedName>
        <fullName evidence="1">Arginine biosynthesis bifunctional protein ArgJ, chloroplastic</fullName>
    </recommendedName>
    <domain>
        <recommendedName>
            <fullName evidence="1">Glutamate N-acetyltransferase</fullName>
            <shortName evidence="1">GAT</shortName>
            <ecNumber evidence="1">2.3.1.35</ecNumber>
        </recommendedName>
        <alternativeName>
            <fullName evidence="1">Ornithine acetyltransferase</fullName>
            <shortName evidence="1">OATase</shortName>
        </alternativeName>
        <alternativeName>
            <fullName evidence="1">Ornithine transacetylase</fullName>
        </alternativeName>
    </domain>
    <domain>
        <recommendedName>
            <fullName evidence="1">Amino-acid acetyltransferase</fullName>
            <ecNumber evidence="1">2.3.1.1</ecNumber>
        </recommendedName>
        <alternativeName>
            <fullName evidence="1">N-acetylglutamate synthase</fullName>
            <shortName evidence="1">AGS</shortName>
        </alternativeName>
    </domain>
    <component>
        <recommendedName>
            <fullName evidence="1">Arginine biosynthesis bifunctional protein ArgJ alpha chain</fullName>
        </recommendedName>
    </component>
    <component>
        <recommendedName>
            <fullName evidence="1">Arginine biosynthesis bifunctional protein ArgJ beta chain</fullName>
        </recommendedName>
    </component>
</protein>
<dbReference type="EC" id="2.3.1.35" evidence="1"/>
<dbReference type="EC" id="2.3.1.1" evidence="1"/>
<dbReference type="EMBL" id="DS544979">
    <property type="protein sequence ID" value="EDQ68044.1"/>
    <property type="molecule type" value="Genomic_DNA"/>
</dbReference>
<dbReference type="RefSeq" id="XP_001767123.1">
    <property type="nucleotide sequence ID" value="XM_001767071.1"/>
</dbReference>
<dbReference type="SMR" id="A9SLE5"/>
<dbReference type="FunCoup" id="A9SLE5">
    <property type="interactions" value="1917"/>
</dbReference>
<dbReference type="PaxDb" id="3218-PP1S90_220V6.2"/>
<dbReference type="EnsemblPlants" id="Pp3c9_2270V3.1">
    <property type="protein sequence ID" value="Pp3c9_2270V3.1"/>
    <property type="gene ID" value="Pp3c9_2270"/>
</dbReference>
<dbReference type="EnsemblPlants" id="Pp3c9_2270V3.3">
    <property type="protein sequence ID" value="Pp3c9_2270V3.3"/>
    <property type="gene ID" value="Pp3c9_2270"/>
</dbReference>
<dbReference type="Gramene" id="Pp3c9_2270V3.1">
    <property type="protein sequence ID" value="Pp3c9_2270V3.1"/>
    <property type="gene ID" value="Pp3c9_2270"/>
</dbReference>
<dbReference type="Gramene" id="Pp3c9_2270V3.3">
    <property type="protein sequence ID" value="Pp3c9_2270V3.3"/>
    <property type="gene ID" value="Pp3c9_2270"/>
</dbReference>
<dbReference type="eggNOG" id="KOG2786">
    <property type="taxonomic scope" value="Eukaryota"/>
</dbReference>
<dbReference type="InParanoid" id="A9SLE5"/>
<dbReference type="OMA" id="WGRIVMA"/>
<dbReference type="OrthoDB" id="2017946at2759"/>
<dbReference type="UniPathway" id="UPA00068">
    <property type="reaction ID" value="UER00106"/>
</dbReference>
<dbReference type="UniPathway" id="UPA00068">
    <property type="reaction ID" value="UER00111"/>
</dbReference>
<dbReference type="Proteomes" id="UP000006727">
    <property type="component" value="Chromosome 9"/>
</dbReference>
<dbReference type="GO" id="GO:0009507">
    <property type="term" value="C:chloroplast"/>
    <property type="evidence" value="ECO:0007669"/>
    <property type="project" value="UniProtKB-SubCell"/>
</dbReference>
<dbReference type="GO" id="GO:0004358">
    <property type="term" value="F:glutamate N-acetyltransferase activity"/>
    <property type="evidence" value="ECO:0007669"/>
    <property type="project" value="UniProtKB-UniRule"/>
</dbReference>
<dbReference type="GO" id="GO:0004042">
    <property type="term" value="F:L-glutamate N-acetyltransferase activity"/>
    <property type="evidence" value="ECO:0000318"/>
    <property type="project" value="GO_Central"/>
</dbReference>
<dbReference type="GO" id="GO:0006526">
    <property type="term" value="P:L-arginine biosynthetic process"/>
    <property type="evidence" value="ECO:0007669"/>
    <property type="project" value="UniProtKB-UniRule"/>
</dbReference>
<dbReference type="GO" id="GO:0006592">
    <property type="term" value="P:ornithine biosynthetic process"/>
    <property type="evidence" value="ECO:0000318"/>
    <property type="project" value="GO_Central"/>
</dbReference>
<dbReference type="CDD" id="cd02152">
    <property type="entry name" value="OAT"/>
    <property type="match status" value="1"/>
</dbReference>
<dbReference type="FunFam" id="3.10.20.340:FF:000001">
    <property type="entry name" value="Arginine biosynthesis bifunctional protein ArgJ, chloroplastic"/>
    <property type="match status" value="1"/>
</dbReference>
<dbReference type="FunFam" id="3.60.70.12:FF:000001">
    <property type="entry name" value="Arginine biosynthesis bifunctional protein ArgJ, chloroplastic"/>
    <property type="match status" value="1"/>
</dbReference>
<dbReference type="Gene3D" id="3.10.20.340">
    <property type="entry name" value="ArgJ beta chain, C-terminal domain"/>
    <property type="match status" value="1"/>
</dbReference>
<dbReference type="Gene3D" id="3.60.70.12">
    <property type="entry name" value="L-amino peptidase D-ALA esterase/amidase"/>
    <property type="match status" value="1"/>
</dbReference>
<dbReference type="HAMAP" id="MF_01106">
    <property type="entry name" value="ArgJ"/>
    <property type="match status" value="1"/>
</dbReference>
<dbReference type="InterPro" id="IPR002813">
    <property type="entry name" value="Arg_biosynth_ArgJ"/>
</dbReference>
<dbReference type="InterPro" id="IPR016117">
    <property type="entry name" value="ArgJ-like_dom_sf"/>
</dbReference>
<dbReference type="InterPro" id="IPR042195">
    <property type="entry name" value="ArgJ_beta_C"/>
</dbReference>
<dbReference type="NCBIfam" id="TIGR00120">
    <property type="entry name" value="ArgJ"/>
    <property type="match status" value="1"/>
</dbReference>
<dbReference type="NCBIfam" id="NF003802">
    <property type="entry name" value="PRK05388.1"/>
    <property type="match status" value="1"/>
</dbReference>
<dbReference type="PANTHER" id="PTHR23100">
    <property type="entry name" value="ARGININE BIOSYNTHESIS BIFUNCTIONAL PROTEIN ARGJ"/>
    <property type="match status" value="1"/>
</dbReference>
<dbReference type="PANTHER" id="PTHR23100:SF0">
    <property type="entry name" value="ARGININE BIOSYNTHESIS BIFUNCTIONAL PROTEIN ARGJ, MITOCHONDRIAL"/>
    <property type="match status" value="1"/>
</dbReference>
<dbReference type="Pfam" id="PF01960">
    <property type="entry name" value="ArgJ"/>
    <property type="match status" value="1"/>
</dbReference>
<dbReference type="SUPFAM" id="SSF56266">
    <property type="entry name" value="DmpA/ArgJ-like"/>
    <property type="match status" value="1"/>
</dbReference>
<proteinExistence type="inferred from homology"/>
<gene>
    <name type="ORF">PHYPADRAFT_213576</name>
</gene>
<comment type="function">
    <text evidence="1">Catalyzes two activities which are involved in the cyclic version of arginine biosynthesis: the synthesis of acetylglutamate from glutamate and acetyl-CoA, and of ornithine by transacetylation between acetylornithine and glutamate.</text>
</comment>
<comment type="catalytic activity">
    <reaction evidence="1">
        <text>N(2)-acetyl-L-ornithine + L-glutamate = N-acetyl-L-glutamate + L-ornithine</text>
        <dbReference type="Rhea" id="RHEA:15349"/>
        <dbReference type="ChEBI" id="CHEBI:29985"/>
        <dbReference type="ChEBI" id="CHEBI:44337"/>
        <dbReference type="ChEBI" id="CHEBI:46911"/>
        <dbReference type="ChEBI" id="CHEBI:57805"/>
        <dbReference type="EC" id="2.3.1.35"/>
    </reaction>
</comment>
<comment type="catalytic activity">
    <reaction evidence="1">
        <text>L-glutamate + acetyl-CoA = N-acetyl-L-glutamate + CoA + H(+)</text>
        <dbReference type="Rhea" id="RHEA:24292"/>
        <dbReference type="ChEBI" id="CHEBI:15378"/>
        <dbReference type="ChEBI" id="CHEBI:29985"/>
        <dbReference type="ChEBI" id="CHEBI:44337"/>
        <dbReference type="ChEBI" id="CHEBI:57287"/>
        <dbReference type="ChEBI" id="CHEBI:57288"/>
        <dbReference type="EC" id="2.3.1.1"/>
    </reaction>
</comment>
<comment type="pathway">
    <text evidence="1">Amino-acid biosynthesis; L-arginine biosynthesis; L-ornithine and N-acetyl-L-glutamate from L-glutamate and N(2)-acetyl-L-ornithine (cyclic): step 1/1.</text>
</comment>
<comment type="pathway">
    <text evidence="1">Amino-acid biosynthesis; L-arginine biosynthesis; N(2)-acetyl-L-ornithine from L-glutamate: step 1/4.</text>
</comment>
<comment type="subunit">
    <text evidence="1">Heterodimer of an alpha and a beta chain.</text>
</comment>
<comment type="subcellular location">
    <subcellularLocation>
        <location evidence="1">Plastid</location>
        <location evidence="1">Chloroplast</location>
    </subcellularLocation>
</comment>
<comment type="miscellaneous">
    <text evidence="1">This protein may be expected to contain an N-terminal transit peptide but none has been predicted.</text>
</comment>
<comment type="similarity">
    <text evidence="1">Belongs to the ArgJ family.</text>
</comment>